<reference key="1">
    <citation type="submission" date="2006-01" db="EMBL/GenBank/DDBJ databases">
        <authorList>
            <consortium name="NIH - Mammalian Gene Collection (MGC) project"/>
        </authorList>
    </citation>
    <scope>NUCLEOTIDE SEQUENCE [LARGE SCALE MRNA]</scope>
    <source>
        <strain>Hereford</strain>
        <tissue>Testis</tissue>
    </source>
</reference>
<sequence length="122" mass="13820">MGTGLRSQSLRGPRPSYGKLQEPWGRPTEGRLRRALSLRQGREKSRSSDGGPERLDTLGQEWLPGSLGDTEQLIQAEQEGSQRWLRQYQQKIRRRWESFVTSFPNVTLSRSASPQPPLGTTS</sequence>
<organism>
    <name type="scientific">Bos taurus</name>
    <name type="common">Bovine</name>
    <dbReference type="NCBI Taxonomy" id="9913"/>
    <lineage>
        <taxon>Eukaryota</taxon>
        <taxon>Metazoa</taxon>
        <taxon>Chordata</taxon>
        <taxon>Craniata</taxon>
        <taxon>Vertebrata</taxon>
        <taxon>Euteleostomi</taxon>
        <taxon>Mammalia</taxon>
        <taxon>Eutheria</taxon>
        <taxon>Laurasiatheria</taxon>
        <taxon>Artiodactyla</taxon>
        <taxon>Ruminantia</taxon>
        <taxon>Pecora</taxon>
        <taxon>Bovidae</taxon>
        <taxon>Bovinae</taxon>
        <taxon>Bos</taxon>
    </lineage>
</organism>
<keyword id="KW-1185">Reference proteome</keyword>
<dbReference type="EMBL" id="BC112590">
    <property type="protein sequence ID" value="AAI12591.1"/>
    <property type="molecule type" value="mRNA"/>
</dbReference>
<dbReference type="RefSeq" id="NP_001070558.1">
    <property type="nucleotide sequence ID" value="NM_001077090.2"/>
</dbReference>
<dbReference type="FunCoup" id="Q2KIL8">
    <property type="interactions" value="4"/>
</dbReference>
<dbReference type="STRING" id="9913.ENSBTAP00000030029"/>
<dbReference type="PaxDb" id="9913-ENSBTAP00000030029"/>
<dbReference type="GeneID" id="768031"/>
<dbReference type="KEGG" id="bta:768031"/>
<dbReference type="CTD" id="768031"/>
<dbReference type="VEuPathDB" id="HostDB:ENSBTAG00000022246"/>
<dbReference type="eggNOG" id="ENOG502SY9F">
    <property type="taxonomic scope" value="Eukaryota"/>
</dbReference>
<dbReference type="HOGENOM" id="CLU_164853_0_0_1"/>
<dbReference type="InParanoid" id="Q2KIL8"/>
<dbReference type="OMA" id="WLKQYQQ"/>
<dbReference type="OrthoDB" id="9447782at2759"/>
<dbReference type="TreeFam" id="TF336876"/>
<dbReference type="Proteomes" id="UP000009136">
    <property type="component" value="Chromosome 29"/>
</dbReference>
<dbReference type="Bgee" id="ENSBTAG00000022246">
    <property type="expression patterns" value="Expressed in liver and 31 other cell types or tissues"/>
</dbReference>
<dbReference type="InterPro" id="IPR027990">
    <property type="entry name" value="DUF4633"/>
</dbReference>
<dbReference type="PANTHER" id="PTHR31831">
    <property type="entry name" value="HYPOTHETICAL PROTEIN LOC689065"/>
    <property type="match status" value="1"/>
</dbReference>
<dbReference type="PANTHER" id="PTHR31831:SF1">
    <property type="entry name" value="RIKEN CDNA 2010003K11 GENE"/>
    <property type="match status" value="1"/>
</dbReference>
<dbReference type="Pfam" id="PF15464">
    <property type="entry name" value="DUF4633"/>
    <property type="match status" value="1"/>
</dbReference>
<feature type="chain" id="PRO_0000328808" description="Uncharacterized protein C11orf86 homolog">
    <location>
        <begin position="1"/>
        <end position="122"/>
    </location>
</feature>
<feature type="region of interest" description="Disordered" evidence="1">
    <location>
        <begin position="1"/>
        <end position="68"/>
    </location>
</feature>
<feature type="compositionally biased region" description="Polar residues" evidence="1">
    <location>
        <begin position="1"/>
        <end position="10"/>
    </location>
</feature>
<feature type="compositionally biased region" description="Basic and acidic residues" evidence="1">
    <location>
        <begin position="40"/>
        <end position="56"/>
    </location>
</feature>
<protein>
    <recommendedName>
        <fullName>Uncharacterized protein C11orf86 homolog</fullName>
    </recommendedName>
</protein>
<accession>Q2KIL8</accession>
<name>CK086_BOVIN</name>
<proteinExistence type="evidence at transcript level"/>
<evidence type="ECO:0000256" key="1">
    <source>
        <dbReference type="SAM" id="MobiDB-lite"/>
    </source>
</evidence>